<comment type="function">
    <text evidence="1">May be involved in the regulation of photosystem II.</text>
</comment>
<comment type="subcellular location">
    <subcellularLocation>
        <location evidence="2">Plastid</location>
        <location evidence="2">Chloroplast thylakoid membrane</location>
    </subcellularLocation>
    <text>Associated with the photosystem II complex.</text>
</comment>
<comment type="similarity">
    <text evidence="4">Belongs to the PsbP family.</text>
</comment>
<sequence>AYGEGANVFGKRKETDQFFEISGDGWSGKL</sequence>
<proteinExistence type="evidence at protein level"/>
<feature type="chain" id="PRO_0000220268" description="Oxygen-evolving enhancer protein 2">
    <location>
        <begin position="1"/>
        <end position="30" status="greater than"/>
    </location>
</feature>
<feature type="non-terminal residue" evidence="3">
    <location>
        <position position="30"/>
    </location>
</feature>
<gene>
    <name type="primary">PSBP</name>
</gene>
<name>PSBP_EUGGR</name>
<protein>
    <recommendedName>
        <fullName>Oxygen-evolving enhancer protein 2</fullName>
        <shortName>OEE2</shortName>
    </recommendedName>
    <alternativeName>
        <fullName>23 kDa subunit of oxygen evolving system of photosystem II</fullName>
    </alternativeName>
    <alternativeName>
        <fullName>23 kDa thylakoid membrane protein</fullName>
    </alternativeName>
    <alternativeName>
        <fullName>OEC 23 kDa subunit</fullName>
    </alternativeName>
</protein>
<dbReference type="SMR" id="P83687"/>
<dbReference type="GO" id="GO:0009507">
    <property type="term" value="C:chloroplast"/>
    <property type="evidence" value="ECO:0000314"/>
    <property type="project" value="UniProtKB"/>
</dbReference>
<dbReference type="GO" id="GO:0009535">
    <property type="term" value="C:chloroplast thylakoid membrane"/>
    <property type="evidence" value="ECO:0007669"/>
    <property type="project" value="UniProtKB-SubCell"/>
</dbReference>
<dbReference type="GO" id="GO:0009523">
    <property type="term" value="C:photosystem II"/>
    <property type="evidence" value="ECO:0007669"/>
    <property type="project" value="UniProtKB-KW"/>
</dbReference>
<dbReference type="GO" id="GO:0015979">
    <property type="term" value="P:photosynthesis"/>
    <property type="evidence" value="ECO:0007669"/>
    <property type="project" value="UniProtKB-KW"/>
</dbReference>
<accession>P83687</accession>
<evidence type="ECO:0000250" key="1">
    <source>
        <dbReference type="UniProtKB" id="P93566"/>
    </source>
</evidence>
<evidence type="ECO:0000269" key="2">
    <source>
    </source>
</evidence>
<evidence type="ECO:0000303" key="3">
    <source>
    </source>
</evidence>
<evidence type="ECO:0000305" key="4"/>
<reference evidence="4" key="1">
    <citation type="journal article" date="2003" name="Biochim. Biophys. Acta">
        <title>Cytochrome f and subunit IV, two essential components of the photosynthetic bf complex typically encoded in the chloroplast genome, are nucleus-encoded in Euglena gracilis.</title>
        <authorList>
            <person name="Santillan Torres J.L."/>
            <person name="Atteia A."/>
            <person name="Claros M.G."/>
            <person name="Gonzalez-Halphen D."/>
        </authorList>
    </citation>
    <scope>PROTEIN SEQUENCE</scope>
    <scope>SUBCELLULAR LOCATION</scope>
</reference>
<keyword id="KW-0150">Chloroplast</keyword>
<keyword id="KW-0903">Direct protein sequencing</keyword>
<keyword id="KW-0472">Membrane</keyword>
<keyword id="KW-0602">Photosynthesis</keyword>
<keyword id="KW-0604">Photosystem II</keyword>
<keyword id="KW-0934">Plastid</keyword>
<keyword id="KW-0793">Thylakoid</keyword>
<organism evidence="4">
    <name type="scientific">Euglena gracilis</name>
    <dbReference type="NCBI Taxonomy" id="3039"/>
    <lineage>
        <taxon>Eukaryota</taxon>
        <taxon>Discoba</taxon>
        <taxon>Euglenozoa</taxon>
        <taxon>Euglenida</taxon>
        <taxon>Spirocuta</taxon>
        <taxon>Euglenophyceae</taxon>
        <taxon>Euglenales</taxon>
        <taxon>Euglenaceae</taxon>
        <taxon>Euglena</taxon>
    </lineage>
</organism>